<feature type="chain" id="PRO_0000293280" description="Small ribosomal subunit protein uS4">
    <location>
        <begin position="1"/>
        <end position="206"/>
    </location>
</feature>
<feature type="domain" description="S4 RNA-binding" evidence="1">
    <location>
        <begin position="96"/>
        <end position="158"/>
    </location>
</feature>
<dbReference type="EMBL" id="AM233362">
    <property type="protein sequence ID" value="CAJ78701.1"/>
    <property type="molecule type" value="Genomic_DNA"/>
</dbReference>
<dbReference type="RefSeq" id="WP_003014378.1">
    <property type="nucleotide sequence ID" value="NZ_CP009694.1"/>
</dbReference>
<dbReference type="SMR" id="Q2A5E6"/>
<dbReference type="GeneID" id="75264237"/>
<dbReference type="KEGG" id="ftl:FTL_0260"/>
<dbReference type="Proteomes" id="UP000001944">
    <property type="component" value="Chromosome"/>
</dbReference>
<dbReference type="GO" id="GO:0015935">
    <property type="term" value="C:small ribosomal subunit"/>
    <property type="evidence" value="ECO:0007669"/>
    <property type="project" value="InterPro"/>
</dbReference>
<dbReference type="GO" id="GO:0019843">
    <property type="term" value="F:rRNA binding"/>
    <property type="evidence" value="ECO:0007669"/>
    <property type="project" value="UniProtKB-UniRule"/>
</dbReference>
<dbReference type="GO" id="GO:0003735">
    <property type="term" value="F:structural constituent of ribosome"/>
    <property type="evidence" value="ECO:0007669"/>
    <property type="project" value="InterPro"/>
</dbReference>
<dbReference type="GO" id="GO:0042274">
    <property type="term" value="P:ribosomal small subunit biogenesis"/>
    <property type="evidence" value="ECO:0007669"/>
    <property type="project" value="TreeGrafter"/>
</dbReference>
<dbReference type="GO" id="GO:0006412">
    <property type="term" value="P:translation"/>
    <property type="evidence" value="ECO:0007669"/>
    <property type="project" value="UniProtKB-UniRule"/>
</dbReference>
<dbReference type="CDD" id="cd00165">
    <property type="entry name" value="S4"/>
    <property type="match status" value="1"/>
</dbReference>
<dbReference type="FunFam" id="1.10.1050.10:FF:000001">
    <property type="entry name" value="30S ribosomal protein S4"/>
    <property type="match status" value="1"/>
</dbReference>
<dbReference type="FunFam" id="3.10.290.10:FF:000001">
    <property type="entry name" value="30S ribosomal protein S4"/>
    <property type="match status" value="1"/>
</dbReference>
<dbReference type="Gene3D" id="1.10.1050.10">
    <property type="entry name" value="Ribosomal Protein S4 Delta 41, Chain A, domain 1"/>
    <property type="match status" value="1"/>
</dbReference>
<dbReference type="Gene3D" id="3.10.290.10">
    <property type="entry name" value="RNA-binding S4 domain"/>
    <property type="match status" value="1"/>
</dbReference>
<dbReference type="HAMAP" id="MF_01306_B">
    <property type="entry name" value="Ribosomal_uS4_B"/>
    <property type="match status" value="1"/>
</dbReference>
<dbReference type="InterPro" id="IPR022801">
    <property type="entry name" value="Ribosomal_uS4"/>
</dbReference>
<dbReference type="InterPro" id="IPR005709">
    <property type="entry name" value="Ribosomal_uS4_bac-type"/>
</dbReference>
<dbReference type="InterPro" id="IPR018079">
    <property type="entry name" value="Ribosomal_uS4_CS"/>
</dbReference>
<dbReference type="InterPro" id="IPR001912">
    <property type="entry name" value="Ribosomal_uS4_N"/>
</dbReference>
<dbReference type="InterPro" id="IPR002942">
    <property type="entry name" value="S4_RNA-bd"/>
</dbReference>
<dbReference type="InterPro" id="IPR036986">
    <property type="entry name" value="S4_RNA-bd_sf"/>
</dbReference>
<dbReference type="NCBIfam" id="NF003717">
    <property type="entry name" value="PRK05327.1"/>
    <property type="match status" value="1"/>
</dbReference>
<dbReference type="NCBIfam" id="TIGR01017">
    <property type="entry name" value="rpsD_bact"/>
    <property type="match status" value="1"/>
</dbReference>
<dbReference type="PANTHER" id="PTHR11831">
    <property type="entry name" value="30S 40S RIBOSOMAL PROTEIN"/>
    <property type="match status" value="1"/>
</dbReference>
<dbReference type="PANTHER" id="PTHR11831:SF4">
    <property type="entry name" value="SMALL RIBOSOMAL SUBUNIT PROTEIN US4M"/>
    <property type="match status" value="1"/>
</dbReference>
<dbReference type="Pfam" id="PF00163">
    <property type="entry name" value="Ribosomal_S4"/>
    <property type="match status" value="1"/>
</dbReference>
<dbReference type="Pfam" id="PF01479">
    <property type="entry name" value="S4"/>
    <property type="match status" value="1"/>
</dbReference>
<dbReference type="SMART" id="SM01390">
    <property type="entry name" value="Ribosomal_S4"/>
    <property type="match status" value="1"/>
</dbReference>
<dbReference type="SMART" id="SM00363">
    <property type="entry name" value="S4"/>
    <property type="match status" value="1"/>
</dbReference>
<dbReference type="SUPFAM" id="SSF55174">
    <property type="entry name" value="Alpha-L RNA-binding motif"/>
    <property type="match status" value="1"/>
</dbReference>
<dbReference type="PROSITE" id="PS00632">
    <property type="entry name" value="RIBOSOMAL_S4"/>
    <property type="match status" value="1"/>
</dbReference>
<dbReference type="PROSITE" id="PS50889">
    <property type="entry name" value="S4"/>
    <property type="match status" value="1"/>
</dbReference>
<proteinExistence type="inferred from homology"/>
<accession>Q2A5E6</accession>
<keyword id="KW-1185">Reference proteome</keyword>
<keyword id="KW-0687">Ribonucleoprotein</keyword>
<keyword id="KW-0689">Ribosomal protein</keyword>
<keyword id="KW-0694">RNA-binding</keyword>
<keyword id="KW-0699">rRNA-binding</keyword>
<comment type="function">
    <text evidence="1">One of the primary rRNA binding proteins, it binds directly to 16S rRNA where it nucleates assembly of the body of the 30S subunit.</text>
</comment>
<comment type="function">
    <text evidence="1">With S5 and S12 plays an important role in translational accuracy.</text>
</comment>
<comment type="subunit">
    <text evidence="1">Part of the 30S ribosomal subunit. Contacts protein S5. The interaction surface between S4 and S5 is involved in control of translational fidelity.</text>
</comment>
<comment type="similarity">
    <text evidence="1">Belongs to the universal ribosomal protein uS4 family.</text>
</comment>
<reference key="1">
    <citation type="submission" date="2006-03" db="EMBL/GenBank/DDBJ databases">
        <title>Complete genome sequence of Francisella tularensis LVS (Live Vaccine Strain).</title>
        <authorList>
            <person name="Chain P."/>
            <person name="Larimer F."/>
            <person name="Land M."/>
            <person name="Stilwagen S."/>
            <person name="Larsson P."/>
            <person name="Bearden S."/>
            <person name="Chu M."/>
            <person name="Oyston P."/>
            <person name="Forsman M."/>
            <person name="Andersson S."/>
            <person name="Lindler L."/>
            <person name="Titball R."/>
            <person name="Garcia E."/>
        </authorList>
    </citation>
    <scope>NUCLEOTIDE SEQUENCE [LARGE SCALE GENOMIC DNA]</scope>
    <source>
        <strain>LVS</strain>
    </source>
</reference>
<sequence>MARYLGPKCKLSRREGTDLFLKSGVKANDEKCKMNTAPGQHGARRARLSDYGLQLREKQKVRRMYGILEGQFKKYYVEASRRKGNTGATLLELLESRLDNVVYRMGFAATRAEARQLVVHKGIMVNGHTCNVPSAQVKAGDVVAVREKAKKQLRIQNAVELAKHRKELSWIDVNTDSLEGTMKSSPDRSELSADINEQLIIELYSK</sequence>
<name>RS4_FRATH</name>
<organism>
    <name type="scientific">Francisella tularensis subsp. holarctica (strain LVS)</name>
    <dbReference type="NCBI Taxonomy" id="376619"/>
    <lineage>
        <taxon>Bacteria</taxon>
        <taxon>Pseudomonadati</taxon>
        <taxon>Pseudomonadota</taxon>
        <taxon>Gammaproteobacteria</taxon>
        <taxon>Thiotrichales</taxon>
        <taxon>Francisellaceae</taxon>
        <taxon>Francisella</taxon>
    </lineage>
</organism>
<protein>
    <recommendedName>
        <fullName evidence="1">Small ribosomal subunit protein uS4</fullName>
    </recommendedName>
    <alternativeName>
        <fullName evidence="2">30S ribosomal protein S4</fullName>
    </alternativeName>
</protein>
<evidence type="ECO:0000255" key="1">
    <source>
        <dbReference type="HAMAP-Rule" id="MF_01306"/>
    </source>
</evidence>
<evidence type="ECO:0000305" key="2"/>
<gene>
    <name evidence="1" type="primary">rpsD</name>
    <name type="ordered locus">FTL_0260</name>
</gene>